<keyword id="KW-0002">3D-structure</keyword>
<keyword id="KW-0010">Activator</keyword>
<keyword id="KW-0025">Alternative splicing</keyword>
<keyword id="KW-0153">Cholesterol metabolism</keyword>
<keyword id="KW-0968">Cytoplasmic vesicle</keyword>
<keyword id="KW-0903">Direct protein sequencing</keyword>
<keyword id="KW-0238">DNA-binding</keyword>
<keyword id="KW-0256">Endoplasmic reticulum</keyword>
<keyword id="KW-0333">Golgi apparatus</keyword>
<keyword id="KW-1017">Isopeptide bond</keyword>
<keyword id="KW-0443">Lipid metabolism</keyword>
<keyword id="KW-0472">Membrane</keyword>
<keyword id="KW-0539">Nucleus</keyword>
<keyword id="KW-0597">Phosphoprotein</keyword>
<keyword id="KW-1267">Proteomics identification</keyword>
<keyword id="KW-1185">Reference proteome</keyword>
<keyword id="KW-0753">Steroid metabolism</keyword>
<keyword id="KW-1207">Sterol metabolism</keyword>
<keyword id="KW-0804">Transcription</keyword>
<keyword id="KW-0805">Transcription regulation</keyword>
<keyword id="KW-0812">Transmembrane</keyword>
<keyword id="KW-1133">Transmembrane helix</keyword>
<keyword id="KW-0832">Ubl conjugation</keyword>
<dbReference type="EMBL" id="U02031">
    <property type="protein sequence ID" value="AAA50746.1"/>
    <property type="molecule type" value="mRNA"/>
</dbReference>
<dbReference type="EMBL" id="CT841522">
    <property type="protein sequence ID" value="CAJ86452.1"/>
    <property type="molecule type" value="mRNA"/>
</dbReference>
<dbReference type="EMBL" id="AL021453">
    <property type="status" value="NOT_ANNOTATED_CDS"/>
    <property type="molecule type" value="Genomic_DNA"/>
</dbReference>
<dbReference type="EMBL" id="Z99716">
    <property type="status" value="NOT_ANNOTATED_CDS"/>
    <property type="molecule type" value="Genomic_DNA"/>
</dbReference>
<dbReference type="EMBL" id="BC051385">
    <property type="protein sequence ID" value="AAH51385.1"/>
    <property type="molecule type" value="mRNA"/>
</dbReference>
<dbReference type="EMBL" id="BC051799">
    <property type="protein sequence ID" value="AAH51799.1"/>
    <property type="status" value="ALT_INIT"/>
    <property type="molecule type" value="mRNA"/>
</dbReference>
<dbReference type="EMBL" id="BC056158">
    <property type="protein sequence ID" value="AAH56158.1"/>
    <property type="molecule type" value="mRNA"/>
</dbReference>
<dbReference type="CCDS" id="CCDS14023.1">
    <molecule id="Q12772-1"/>
</dbReference>
<dbReference type="PIR" id="A49397">
    <property type="entry name" value="A54962"/>
</dbReference>
<dbReference type="RefSeq" id="NP_004590.2">
    <molecule id="Q12772-1"/>
    <property type="nucleotide sequence ID" value="NM_004599.3"/>
</dbReference>
<dbReference type="PDB" id="1UKL">
    <property type="method" value="X-ray"/>
    <property type="resolution" value="3.00 A"/>
    <property type="chains" value="C/D/E/F=343-403"/>
</dbReference>
<dbReference type="PDBsum" id="1UKL"/>
<dbReference type="SMR" id="Q12772"/>
<dbReference type="BioGRID" id="112599">
    <property type="interactions" value="328"/>
</dbReference>
<dbReference type="ComplexPortal" id="CPX-25721">
    <property type="entry name" value="SREBP-SCAP transcription regulator complex, SREBF2 variant"/>
</dbReference>
<dbReference type="CORUM" id="Q12772"/>
<dbReference type="DIP" id="DIP-263N"/>
<dbReference type="ELM" id="Q12772"/>
<dbReference type="FunCoup" id="Q12772">
    <property type="interactions" value="2639"/>
</dbReference>
<dbReference type="IntAct" id="Q12772">
    <property type="interactions" value="95"/>
</dbReference>
<dbReference type="MINT" id="Q12772"/>
<dbReference type="STRING" id="9606.ENSP00000354476"/>
<dbReference type="BindingDB" id="Q12772"/>
<dbReference type="ChEMBL" id="CHEMBL1795166"/>
<dbReference type="CarbonylDB" id="Q12772"/>
<dbReference type="GlyCosmos" id="Q12772">
    <property type="glycosylation" value="2 sites, 1 glycan"/>
</dbReference>
<dbReference type="GlyGen" id="Q12772">
    <property type="glycosylation" value="3 sites, 1 O-linked glycan (3 sites)"/>
</dbReference>
<dbReference type="iPTMnet" id="Q12772"/>
<dbReference type="PhosphoSitePlus" id="Q12772"/>
<dbReference type="BioMuta" id="SREBF2"/>
<dbReference type="DMDM" id="116242800"/>
<dbReference type="jPOST" id="Q12772"/>
<dbReference type="MassIVE" id="Q12772"/>
<dbReference type="PaxDb" id="9606-ENSP00000354476"/>
<dbReference type="PeptideAtlas" id="Q12772"/>
<dbReference type="ProteomicsDB" id="58919">
    <molecule id="Q12772-1"/>
</dbReference>
<dbReference type="Pumba" id="Q12772"/>
<dbReference type="Antibodypedia" id="13093">
    <property type="antibodies" value="380 antibodies from 38 providers"/>
</dbReference>
<dbReference type="DNASU" id="6721"/>
<dbReference type="Ensembl" id="ENST00000361204.9">
    <molecule id="Q12772-1"/>
    <property type="protein sequence ID" value="ENSP00000354476.4"/>
    <property type="gene ID" value="ENSG00000198911.13"/>
</dbReference>
<dbReference type="GeneID" id="6721"/>
<dbReference type="KEGG" id="hsa:6721"/>
<dbReference type="MANE-Select" id="ENST00000361204.9">
    <property type="protein sequence ID" value="ENSP00000354476.4"/>
    <property type="RefSeq nucleotide sequence ID" value="NM_004599.4"/>
    <property type="RefSeq protein sequence ID" value="NP_004590.2"/>
</dbReference>
<dbReference type="UCSC" id="uc003bbi.5">
    <molecule id="Q12772-1"/>
    <property type="organism name" value="human"/>
</dbReference>
<dbReference type="AGR" id="HGNC:11290"/>
<dbReference type="CTD" id="6721"/>
<dbReference type="DisGeNET" id="6721"/>
<dbReference type="GeneCards" id="SREBF2"/>
<dbReference type="HGNC" id="HGNC:11290">
    <property type="gene designation" value="SREBF2"/>
</dbReference>
<dbReference type="HPA" id="ENSG00000198911">
    <property type="expression patterns" value="Low tissue specificity"/>
</dbReference>
<dbReference type="MalaCards" id="SREBF2"/>
<dbReference type="MIM" id="600481">
    <property type="type" value="gene"/>
</dbReference>
<dbReference type="neXtProt" id="NX_Q12772"/>
<dbReference type="OpenTargets" id="ENSG00000198911"/>
<dbReference type="PharmGKB" id="PA336"/>
<dbReference type="VEuPathDB" id="HostDB:ENSG00000198911"/>
<dbReference type="eggNOG" id="KOG2588">
    <property type="taxonomic scope" value="Eukaryota"/>
</dbReference>
<dbReference type="GeneTree" id="ENSGT00940000157339"/>
<dbReference type="HOGENOM" id="CLU_008042_0_0_1"/>
<dbReference type="InParanoid" id="Q12772"/>
<dbReference type="OMA" id="QQAVMIT"/>
<dbReference type="OrthoDB" id="2133190at2759"/>
<dbReference type="PAN-GO" id="Q12772">
    <property type="GO annotations" value="5 GO annotations based on evolutionary models"/>
</dbReference>
<dbReference type="PhylomeDB" id="Q12772"/>
<dbReference type="TreeFam" id="TF313894"/>
<dbReference type="PathwayCommons" id="Q12772"/>
<dbReference type="Reactome" id="R-HSA-1655829">
    <property type="pathway name" value="Regulation of cholesterol biosynthesis by SREBP (SREBF)"/>
</dbReference>
<dbReference type="Reactome" id="R-HSA-191273">
    <property type="pathway name" value="Cholesterol biosynthesis"/>
</dbReference>
<dbReference type="Reactome" id="R-HSA-1989781">
    <property type="pathway name" value="PPARA activates gene expression"/>
</dbReference>
<dbReference type="Reactome" id="R-HSA-2426168">
    <property type="pathway name" value="Activation of gene expression by SREBF (SREBP)"/>
</dbReference>
<dbReference type="Reactome" id="R-HSA-381340">
    <property type="pathway name" value="Transcriptional regulation of white adipocyte differentiation"/>
</dbReference>
<dbReference type="Reactome" id="R-HSA-9619665">
    <property type="pathway name" value="EGR2 and SOX10-mediated initiation of Schwann cell myelination"/>
</dbReference>
<dbReference type="SignaLink" id="Q12772"/>
<dbReference type="SIGNOR" id="Q12772"/>
<dbReference type="BioGRID-ORCS" id="6721">
    <property type="hits" value="51 hits in 1191 CRISPR screens"/>
</dbReference>
<dbReference type="ChiTaRS" id="SREBF2">
    <property type="organism name" value="human"/>
</dbReference>
<dbReference type="EvolutionaryTrace" id="Q12772"/>
<dbReference type="GeneWiki" id="SREBF2"/>
<dbReference type="GenomeRNAi" id="6721"/>
<dbReference type="Pharos" id="Q12772">
    <property type="development level" value="Tchem"/>
</dbReference>
<dbReference type="PRO" id="PR:Q12772"/>
<dbReference type="Proteomes" id="UP000005640">
    <property type="component" value="Chromosome 22"/>
</dbReference>
<dbReference type="RNAct" id="Q12772">
    <property type="molecule type" value="protein"/>
</dbReference>
<dbReference type="Bgee" id="ENSG00000198911">
    <property type="expression patterns" value="Expressed in ganglionic eminence and 209 other cell types or tissues"/>
</dbReference>
<dbReference type="ExpressionAtlas" id="Q12772">
    <property type="expression patterns" value="baseline and differential"/>
</dbReference>
<dbReference type="GO" id="GO:0000785">
    <property type="term" value="C:chromatin"/>
    <property type="evidence" value="ECO:0000247"/>
    <property type="project" value="NTNU_SB"/>
</dbReference>
<dbReference type="GO" id="GO:0005737">
    <property type="term" value="C:cytoplasm"/>
    <property type="evidence" value="ECO:0000314"/>
    <property type="project" value="UniProtKB"/>
</dbReference>
<dbReference type="GO" id="GO:0005829">
    <property type="term" value="C:cytosol"/>
    <property type="evidence" value="ECO:0000304"/>
    <property type="project" value="Reactome"/>
</dbReference>
<dbReference type="GO" id="GO:0005783">
    <property type="term" value="C:endoplasmic reticulum"/>
    <property type="evidence" value="ECO:0000314"/>
    <property type="project" value="HPA"/>
</dbReference>
<dbReference type="GO" id="GO:0005789">
    <property type="term" value="C:endoplasmic reticulum membrane"/>
    <property type="evidence" value="ECO:0000304"/>
    <property type="project" value="Reactome"/>
</dbReference>
<dbReference type="GO" id="GO:0012507">
    <property type="term" value="C:ER to Golgi transport vesicle membrane"/>
    <property type="evidence" value="ECO:0007669"/>
    <property type="project" value="UniProtKB-SubCell"/>
</dbReference>
<dbReference type="GO" id="GO:0000139">
    <property type="term" value="C:Golgi membrane"/>
    <property type="evidence" value="ECO:0000304"/>
    <property type="project" value="Reactome"/>
</dbReference>
<dbReference type="GO" id="GO:0043231">
    <property type="term" value="C:intracellular membrane-bounded organelle"/>
    <property type="evidence" value="ECO:0000314"/>
    <property type="project" value="HPA"/>
</dbReference>
<dbReference type="GO" id="GO:0005654">
    <property type="term" value="C:nucleoplasm"/>
    <property type="evidence" value="ECO:0000314"/>
    <property type="project" value="HPA"/>
</dbReference>
<dbReference type="GO" id="GO:0005634">
    <property type="term" value="C:nucleus"/>
    <property type="evidence" value="ECO:0000314"/>
    <property type="project" value="UniProtKB"/>
</dbReference>
<dbReference type="GO" id="GO:0032937">
    <property type="term" value="C:SREBP-SCAP-Insig complex"/>
    <property type="evidence" value="ECO:0000314"/>
    <property type="project" value="UniProtKB"/>
</dbReference>
<dbReference type="GO" id="GO:0000981">
    <property type="term" value="F:DNA-binding transcription factor activity, RNA polymerase II-specific"/>
    <property type="evidence" value="ECO:0000314"/>
    <property type="project" value="UniProt"/>
</dbReference>
<dbReference type="GO" id="GO:0001227">
    <property type="term" value="F:DNA-binding transcription repressor activity, RNA polymerase II-specific"/>
    <property type="evidence" value="ECO:0000314"/>
    <property type="project" value="BHF-UCL"/>
</dbReference>
<dbReference type="GO" id="GO:0070888">
    <property type="term" value="F:E-box binding"/>
    <property type="evidence" value="ECO:0000314"/>
    <property type="project" value="BHF-UCL"/>
</dbReference>
<dbReference type="GO" id="GO:0046983">
    <property type="term" value="F:protein dimerization activity"/>
    <property type="evidence" value="ECO:0007669"/>
    <property type="project" value="InterPro"/>
</dbReference>
<dbReference type="GO" id="GO:0000978">
    <property type="term" value="F:RNA polymerase II cis-regulatory region sequence-specific DNA binding"/>
    <property type="evidence" value="ECO:0000314"/>
    <property type="project" value="BHF-UCL"/>
</dbReference>
<dbReference type="GO" id="GO:1990837">
    <property type="term" value="F:sequence-specific double-stranded DNA binding"/>
    <property type="evidence" value="ECO:0000314"/>
    <property type="project" value="ARUK-UCL"/>
</dbReference>
<dbReference type="GO" id="GO:0071499">
    <property type="term" value="P:cellular response to laminar fluid shear stress"/>
    <property type="evidence" value="ECO:0000303"/>
    <property type="project" value="BHF-UCL"/>
</dbReference>
<dbReference type="GO" id="GO:0071404">
    <property type="term" value="P:cellular response to low-density lipoprotein particle stimulus"/>
    <property type="evidence" value="ECO:0000270"/>
    <property type="project" value="BHF-UCL"/>
</dbReference>
<dbReference type="GO" id="GO:0009267">
    <property type="term" value="P:cellular response to starvation"/>
    <property type="evidence" value="ECO:0000315"/>
    <property type="project" value="ParkinsonsUK-UCL"/>
</dbReference>
<dbReference type="GO" id="GO:0042632">
    <property type="term" value="P:cholesterol homeostasis"/>
    <property type="evidence" value="ECO:0007669"/>
    <property type="project" value="Ensembl"/>
</dbReference>
<dbReference type="GO" id="GO:0008203">
    <property type="term" value="P:cholesterol metabolic process"/>
    <property type="evidence" value="ECO:0007669"/>
    <property type="project" value="UniProtKB-KW"/>
</dbReference>
<dbReference type="GO" id="GO:0006629">
    <property type="term" value="P:lipid metabolic process"/>
    <property type="evidence" value="ECO:0000304"/>
    <property type="project" value="ProtInc"/>
</dbReference>
<dbReference type="GO" id="GO:1900222">
    <property type="term" value="P:negative regulation of amyloid-beta clearance"/>
    <property type="evidence" value="ECO:0000315"/>
    <property type="project" value="ARUK-UCL"/>
</dbReference>
<dbReference type="GO" id="GO:0090370">
    <property type="term" value="P:negative regulation of cholesterol efflux"/>
    <property type="evidence" value="ECO:0000314"/>
    <property type="project" value="BHF-UCL"/>
</dbReference>
<dbReference type="GO" id="GO:0000122">
    <property type="term" value="P:negative regulation of transcription by RNA polymerase II"/>
    <property type="evidence" value="ECO:0000314"/>
    <property type="project" value="BHF-UCL"/>
</dbReference>
<dbReference type="GO" id="GO:0045542">
    <property type="term" value="P:positive regulation of cholesterol biosynthetic process"/>
    <property type="evidence" value="ECO:0000314"/>
    <property type="project" value="UniProt"/>
</dbReference>
<dbReference type="GO" id="GO:0010886">
    <property type="term" value="P:positive regulation of cholesterol storage"/>
    <property type="evidence" value="ECO:0000314"/>
    <property type="project" value="BHF-UCL"/>
</dbReference>
<dbReference type="GO" id="GO:1902895">
    <property type="term" value="P:positive regulation of miRNA transcription"/>
    <property type="evidence" value="ECO:0007669"/>
    <property type="project" value="Ensembl"/>
</dbReference>
<dbReference type="GO" id="GO:1903955">
    <property type="term" value="P:positive regulation of protein targeting to mitochondrion"/>
    <property type="evidence" value="ECO:0007001"/>
    <property type="project" value="ParkinsonsUK-UCL"/>
</dbReference>
<dbReference type="GO" id="GO:0045944">
    <property type="term" value="P:positive regulation of transcription by RNA polymerase II"/>
    <property type="evidence" value="ECO:0000314"/>
    <property type="project" value="UniProtKB"/>
</dbReference>
<dbReference type="GO" id="GO:1901524">
    <property type="term" value="P:regulation of mitophagy"/>
    <property type="evidence" value="ECO:0007001"/>
    <property type="project" value="ParkinsonsUK-UCL"/>
</dbReference>
<dbReference type="GO" id="GO:0008593">
    <property type="term" value="P:regulation of Notch signaling pathway"/>
    <property type="evidence" value="ECO:0000250"/>
    <property type="project" value="UniProtKB"/>
</dbReference>
<dbReference type="GO" id="GO:0032933">
    <property type="term" value="P:SREBP signaling pathway"/>
    <property type="evidence" value="ECO:0000314"/>
    <property type="project" value="CACAO"/>
</dbReference>
<dbReference type="CDD" id="cd18922">
    <property type="entry name" value="bHLHzip_SREBP2"/>
    <property type="match status" value="1"/>
</dbReference>
<dbReference type="FunFam" id="4.10.280.10:FF:000016">
    <property type="entry name" value="Sterol regulatory element-binding transcription factor 1"/>
    <property type="match status" value="1"/>
</dbReference>
<dbReference type="Gene3D" id="4.10.280.10">
    <property type="entry name" value="Helix-loop-helix DNA-binding domain"/>
    <property type="match status" value="1"/>
</dbReference>
<dbReference type="IDEAL" id="IID00242"/>
<dbReference type="InterPro" id="IPR011598">
    <property type="entry name" value="bHLH_dom"/>
</dbReference>
<dbReference type="InterPro" id="IPR036638">
    <property type="entry name" value="HLH_DNA-bd_sf"/>
</dbReference>
<dbReference type="PANTHER" id="PTHR46062">
    <property type="entry name" value="STEROL REGULATORY ELEMENT-BINDING PROTEIN"/>
    <property type="match status" value="1"/>
</dbReference>
<dbReference type="PANTHER" id="PTHR46062:SF3">
    <property type="entry name" value="STEROL REGULATORY ELEMENT-BINDING PROTEIN 2"/>
    <property type="match status" value="1"/>
</dbReference>
<dbReference type="Pfam" id="PF00010">
    <property type="entry name" value="HLH"/>
    <property type="match status" value="1"/>
</dbReference>
<dbReference type="SMART" id="SM00353">
    <property type="entry name" value="HLH"/>
    <property type="match status" value="1"/>
</dbReference>
<dbReference type="SUPFAM" id="SSF47459">
    <property type="entry name" value="HLH, helix-loop-helix DNA-binding domain"/>
    <property type="match status" value="1"/>
</dbReference>
<dbReference type="PROSITE" id="PS50888">
    <property type="entry name" value="BHLH"/>
    <property type="match status" value="1"/>
</dbReference>
<sequence length="1141" mass="123688">MDDSGELGGLETMETLTELGDELTLGDIDEMLQFVSNQVGEFPDLFSEQLCSSFPGSGGSGSSSGSSGSSSSSSNGRGSSSGAVDPSVQRSFTQVTLPSFSPSAASPQAPTLQVKVSPTSVPTTPRATPILQPRPQPQPQPQTQLQQQTVMITPTFSTTPQTRIIQQPLIYQNAATSFQVLQPQVQSLVTSSQVQPVTIQQQVQTVQAQRVLTQTANGTLQTLAPATVQTVAAPQVQQVPVLVQPQIIKTDSLVLTTLKTDGSPVMAAVQNPALTALTTPIQTAALQVPTLVGSSGTILTTMPVMMGQEKVPIKQVPGGVKQLEPPKEGERRTTHNIIEKRYRSSINDKIIELKDLVMGTDAKMHKSGVLRKAIDYIKYLQQVNHKLRQENMVLKLANQKNKLLKGIDLGSLVDNEVDLKIEDFNQNVLLMSPPASDSGSQAGFSPYSIDSEPGSPLLDDAKVKDEPDSPPVALGMVDRSRILLCVLTFLCLSFNPLTSLLQWGGAHDSDQHPHSGSGRSVLSFESGSGGWFDWMMPTLLLWLVNGVIVLSVFVKLLVHGEPVIRPHSRSSVTFWRHRKQADLDLARGDFAAAAGNLQTCLAVLGRALPTSRLDLACSLSWNVIRYSLQKLRLVRWLLKKVFQCRRATPATEAGFEDEAKTSARDAALAYHRLHQLHITGKLPAGSACSDVHMALCAVNLAECAEEKIPPSTLVEIHLTAAMGLKTRCGGKLGFLASYFLSRAQSLCGPEHSAVPDSLRWLCHPLGQKFFMERSWSVKSAAKESLYCAQRNPADPIAQVHQAFCKNLLERAIESLVKPQAKKKAGDQEEESCEFSSALEYLKLLHSFVDSVGVMSPPLSRSSVLKSALGPDIICRWWTSAITVAISWLQGDDAAVRSHFTKVERIPKALEVTESPLVKAIFHACRAMHASLPGKADGQQSSFCHCERASGHLWSSLNVSGATSDPALNHVVQLLTCDLLLSLRTALWQKQASASQAVGETYHASGAELAGFQRDLGSLRRLAHSFRPAYRKVFLHEATVRLMAGASPTRTHQLLEHSLRRRTTQSTKHGEVDAWPGQRERATAILLACRHLPLSFLSSPGQRAVLLAEAARTLEKVGDRRSCNDCQQMIVKLGGGTAIAAS</sequence>
<proteinExistence type="evidence at protein level"/>
<comment type="function">
    <molecule>Sterol regulatory element-binding protein 2</molecule>
    <text evidence="13">Precursor of the transcription factor form (Processed sterol regulatory element-binding protein 2), which is embedded in the endoplasmic reticulum membrane (PubMed:32322062). Low sterol concentrations promote processing of this form, releasing the transcription factor form that translocates into the nucleus and activates transcription of genes involved in cholesterol biosynthesis (PubMed:32322062).</text>
</comment>
<comment type="function">
    <molecule>Processed sterol regulatory element-binding protein 2</molecule>
    <text evidence="7 13 16">Key transcription factor that regulates expression of genes involved in cholesterol biosynthesis (PubMed:12177166, PubMed:32322062). Binds to the sterol regulatory element 1 (SRE-1) (5'-ATCACCCCAC-3'). Has dual sequence specificity binding to both an E-box motif (5'-ATCACGTGA-3') and to SRE-1 (5'-ATCACCCCAC-3') (PubMed:12177166, PubMed:7903453). Regulates transcription of genes related to cholesterol synthesis pathway (PubMed:12177166, PubMed:32322062).</text>
</comment>
<comment type="activity regulation">
    <text evidence="1">Activation by cleavage is down-regulated upon activation of SIRT3-dependent PRKAA1/AMPK-alpha signaling cascade which leads to inhibition of ATP-consuming lipogenesis to restore cellular energy balance.</text>
</comment>
<comment type="subunit">
    <molecule>Sterol regulatory element-binding protein 2</molecule>
    <text evidence="10 11 13">Forms a tight complex with SCAP, the SCAP-SREBP complex, in the endoplasmic reticulum membrane and the Golgi apparatus (PubMed:19706601, PubMed:26311497, PubMed:32322062). Interacts with PAQR3; the interaction anchors the SCAP-SREBP complex to the Golgi apparatus in low cholesterol conditions (PubMed:26311497). Interacts (via C-terminal domain) with RNF139 (PubMed:19706601).</text>
</comment>
<comment type="subunit">
    <molecule>Processed sterol regulatory element-binding protein 2</molecule>
    <text evidence="1">Homodimer; efficient DNA binding of the soluble transcription factor fragment requires dimerization with another bHLH protein (By similarity). Interacts with LMNA (By similarity).</text>
</comment>
<comment type="interaction">
    <interactant intactId="EBI-465059">
        <id>Q12772</id>
    </interactant>
    <interactant intactId="EBI-81215">
        <id>Q92793</id>
        <label>CREBBP</label>
    </interactant>
    <organismsDiffer>false</organismsDiffer>
    <experiments>2</experiments>
</comment>
<comment type="interaction">
    <interactant intactId="EBI-465059">
        <id>Q12772</id>
    </interactant>
    <interactant intactId="EBI-701903">
        <id>Q14192</id>
        <label>FHL2</label>
    </interactant>
    <organismsDiffer>false</organismsDiffer>
    <experiments>5</experiments>
</comment>
<comment type="interaction">
    <interactant intactId="EBI-465059">
        <id>Q12772</id>
    </interactant>
    <interactant intactId="EBI-2802853">
        <id>P20036</id>
        <label>HLA-DPA1</label>
    </interactant>
    <organismsDiffer>false</organismsDiffer>
    <experiments>3</experiments>
</comment>
<comment type="interaction">
    <interactant intactId="EBI-465059">
        <id>Q12772</id>
    </interactant>
    <interactant intactId="EBI-1049011">
        <id>P41235</id>
        <label>HNF4A</label>
    </interactant>
    <organismsDiffer>false</organismsDiffer>
    <experiments>2</experiments>
</comment>
<comment type="interaction">
    <interactant intactId="EBI-465059">
        <id>Q12772</id>
    </interactant>
    <interactant intactId="EBI-394506">
        <id>Q96RN5</id>
        <label>MED15</label>
    </interactant>
    <organismsDiffer>false</organismsDiffer>
    <experiments>2</experiments>
</comment>
<comment type="interaction">
    <interactant intactId="EBI-465059">
        <id>Q12772</id>
    </interactant>
    <interactant intactId="EBI-11956831">
        <id>Q13952-2</id>
        <label>NFYC</label>
    </interactant>
    <organismsDiffer>false</organismsDiffer>
    <experiments>3</experiments>
</comment>
<comment type="interaction">
    <interactant intactId="EBI-465059">
        <id>Q12772</id>
    </interactant>
    <interactant intactId="EBI-298336">
        <id>P08047</id>
        <label>SP1</label>
    </interactant>
    <organismsDiffer>false</organismsDiffer>
    <experiments>3</experiments>
</comment>
<comment type="interaction">
    <interactant intactId="EBI-465059">
        <id>Q12772</id>
    </interactant>
    <interactant intactId="EBI-366083">
        <id>P04637</id>
        <label>TP53</label>
    </interactant>
    <organismsDiffer>false</organismsDiffer>
    <experiments>3</experiments>
</comment>
<comment type="subcellular location">
    <molecule>Sterol regulatory element-binding protein 2</molecule>
    <subcellularLocation>
        <location evidence="8">Endoplasmic reticulum membrane</location>
        <topology evidence="2">Multi-pass membrane protein</topology>
    </subcellularLocation>
    <subcellularLocation>
        <location evidence="11 12">Golgi apparatus membrane</location>
        <topology evidence="2">Multi-pass membrane protein</topology>
    </subcellularLocation>
    <subcellularLocation>
        <location evidence="22">Cytoplasmic vesicle</location>
        <location evidence="22">COPII-coated vesicle membrane</location>
        <topology evidence="2">Multi-pass membrane protein</topology>
    </subcellularLocation>
    <text evidence="11 13">At high sterol concentrations, the SCAP-SREBP is retained in the endoplasmic reticulum (PubMed:32322062). Low sterol concentrations promote recruitment into COPII-coated vesicles and transport of the SCAP-SREBP to the Golgi, where it is processed (PubMed:32322062).</text>
</comment>
<comment type="subcellular location">
    <molecule>Processed sterol regulatory element-binding protein 2</molecule>
    <subcellularLocation>
        <location evidence="6 13">Nucleus</location>
    </subcellularLocation>
    <text evidence="1">Transported into the nucleus with the help of importin-beta. Dimerization of the bHLH domain is a prerequisite for importin beta-dependent nuclear import.</text>
</comment>
<comment type="alternative products">
    <event type="alternative splicing"/>
    <isoform>
        <id>Q12772-1</id>
        <name>1</name>
        <sequence type="displayed"/>
    </isoform>
    <isoform>
        <id>Q12772-2</id>
        <name>2</name>
        <sequence type="described" ref="VSP_054283 VSP_054284 VSP_054285"/>
    </isoform>
</comment>
<comment type="tissue specificity">
    <text evidence="16">Ubiquitously expressed in adult and fetal tissues.</text>
</comment>
<comment type="PTM">
    <molecule>Sterol regulatory element-binding protein 2</molecule>
    <text evidence="5 13 17 18 19">Processed in the Golgi apparatus, releasing the protein from the membrane (PubMed:10805775, PubMed:32322062, PubMed:8626610, PubMed:9651382). At low cholesterol the SCAP-SREBP complex is recruited into COPII vesicles for export from the endoplasmic reticulum (PubMed:10805775, PubMed:32322062, PubMed:8626610, PubMed:9651382). In the Golgi, complex SREBPs are cleaved sequentially by site-1 (MBTPS1, S1P) and site-2 (MBTPS2, S2P) protease (PubMed:10805775, PubMed:32322062, PubMed:8626610, PubMed:9651382). The first cleavage by site-1 protease occurs within the luminal loop, the second cleavage by site-2 protease occurs within the first transmembrane domain, releasing the transcription factor from the Golgi membrane (PubMed:10805775, PubMed:9651382). Apoptosis triggers cleavage by the cysteine proteases caspase-3 and caspase-7. Cleavage and activation is induced by mediated cholesterol efflux (PubMed:8643593).</text>
</comment>
<comment type="PTM">
    <text evidence="1">Phosphorylated by AMPK, leading to suppress protein processing and nuclear translocation, and repress target gene expression.</text>
</comment>
<comment type="PTM">
    <molecule>Sterol regulatory element-binding protein 2</molecule>
    <text evidence="15">SCAP-free SREBF2 is ubiquitinated by the BCR(ARMC5) complex, leading to its degradation.</text>
</comment>
<comment type="PTM">
    <molecule>Processed sterol regulatory element-binding protein 2</molecule>
    <text evidence="6">Ubiquitinated; the nuclear form has a rapid turnover and is rapidly ubiquitinated and degraded by the proteasome in the nucleus.</text>
</comment>
<comment type="similarity">
    <text evidence="24">Belongs to the SREBP family.</text>
</comment>
<comment type="sequence caution" evidence="24">
    <conflict type="erroneous initiation">
        <sequence resource="EMBL-CDS" id="AAH51799"/>
    </conflict>
    <text>Extended N-terminus.</text>
</comment>
<gene>
    <name evidence="23 27" type="primary">SREBF2</name>
    <name type="synonym">BHLHD2</name>
    <name evidence="20" type="synonym">SREBP2</name>
</gene>
<accession>Q12772</accession>
<accession>Q05BD5</accession>
<accession>Q6GTH7</accession>
<accession>Q86V36</accession>
<accession>Q9UH04</accession>
<reference key="1">
    <citation type="journal article" date="1993" name="Proc. Natl. Acad. Sci. U.S.A.">
        <title>SREBP-2, a second basic-helix-loop-helix-leucine zipper protein that stimulates transcription by binding to a sterol regulatory element.</title>
        <authorList>
            <person name="Hua X."/>
            <person name="Yokoyama C."/>
            <person name="Wu J."/>
            <person name="Briggs M.R."/>
            <person name="Brown M.S."/>
            <person name="Goldstein J.L."/>
            <person name="Wang X."/>
        </authorList>
    </citation>
    <scope>NUCLEOTIDE SEQUENCE [MRNA] (ISOFORM 1)</scope>
    <scope>FUNCTION</scope>
    <scope>TISSUE SPECIFICITY</scope>
    <scope>VARIANT ALA-595</scope>
</reference>
<reference key="2">
    <citation type="journal article" date="2004" name="Genome Biol.">
        <title>A genome annotation-driven approach to cloning the human ORFeome.</title>
        <authorList>
            <person name="Collins J.E."/>
            <person name="Wright C.L."/>
            <person name="Edwards C.A."/>
            <person name="Davis M.P."/>
            <person name="Grinham J.A."/>
            <person name="Cole C.G."/>
            <person name="Goward M.E."/>
            <person name="Aguado B."/>
            <person name="Mallya M."/>
            <person name="Mokrab Y."/>
            <person name="Huckle E.J."/>
            <person name="Beare D.M."/>
            <person name="Dunham I."/>
        </authorList>
    </citation>
    <scope>NUCLEOTIDE SEQUENCE [LARGE SCALE MRNA] (ISOFORM 1)</scope>
</reference>
<reference key="3">
    <citation type="journal article" date="1999" name="Nature">
        <title>The DNA sequence of human chromosome 22.</title>
        <authorList>
            <person name="Dunham I."/>
            <person name="Hunt A.R."/>
            <person name="Collins J.E."/>
            <person name="Bruskiewich R."/>
            <person name="Beare D.M."/>
            <person name="Clamp M."/>
            <person name="Smink L.J."/>
            <person name="Ainscough R."/>
            <person name="Almeida J.P."/>
            <person name="Babbage A.K."/>
            <person name="Bagguley C."/>
            <person name="Bailey J."/>
            <person name="Barlow K.F."/>
            <person name="Bates K.N."/>
            <person name="Beasley O.P."/>
            <person name="Bird C.P."/>
            <person name="Blakey S.E."/>
            <person name="Bridgeman A.M."/>
            <person name="Buck D."/>
            <person name="Burgess J."/>
            <person name="Burrill W.D."/>
            <person name="Burton J."/>
            <person name="Carder C."/>
            <person name="Carter N.P."/>
            <person name="Chen Y."/>
            <person name="Clark G."/>
            <person name="Clegg S.M."/>
            <person name="Cobley V.E."/>
            <person name="Cole C.G."/>
            <person name="Collier R.E."/>
            <person name="Connor R."/>
            <person name="Conroy D."/>
            <person name="Corby N.R."/>
            <person name="Coville G.J."/>
            <person name="Cox A.V."/>
            <person name="Davis J."/>
            <person name="Dawson E."/>
            <person name="Dhami P.D."/>
            <person name="Dockree C."/>
            <person name="Dodsworth S.J."/>
            <person name="Durbin R.M."/>
            <person name="Ellington A.G."/>
            <person name="Evans K.L."/>
            <person name="Fey J.M."/>
            <person name="Fleming K."/>
            <person name="French L."/>
            <person name="Garner A.A."/>
            <person name="Gilbert J.G.R."/>
            <person name="Goward M.E."/>
            <person name="Grafham D.V."/>
            <person name="Griffiths M.N.D."/>
            <person name="Hall C."/>
            <person name="Hall R.E."/>
            <person name="Hall-Tamlyn G."/>
            <person name="Heathcott R.W."/>
            <person name="Ho S."/>
            <person name="Holmes S."/>
            <person name="Hunt S.E."/>
            <person name="Jones M.C."/>
            <person name="Kershaw J."/>
            <person name="Kimberley A.M."/>
            <person name="King A."/>
            <person name="Laird G.K."/>
            <person name="Langford C.F."/>
            <person name="Leversha M.A."/>
            <person name="Lloyd C."/>
            <person name="Lloyd D.M."/>
            <person name="Martyn I.D."/>
            <person name="Mashreghi-Mohammadi M."/>
            <person name="Matthews L.H."/>
            <person name="Mccann O.T."/>
            <person name="Mcclay J."/>
            <person name="Mclaren S."/>
            <person name="McMurray A.A."/>
            <person name="Milne S.A."/>
            <person name="Mortimore B.J."/>
            <person name="Odell C.N."/>
            <person name="Pavitt R."/>
            <person name="Pearce A.V."/>
            <person name="Pearson D."/>
            <person name="Phillimore B.J.C.T."/>
            <person name="Phillips S.H."/>
            <person name="Plumb R.W."/>
            <person name="Ramsay H."/>
            <person name="Ramsey Y."/>
            <person name="Rogers L."/>
            <person name="Ross M.T."/>
            <person name="Scott C.E."/>
            <person name="Sehra H.K."/>
            <person name="Skuce C.D."/>
            <person name="Smalley S."/>
            <person name="Smith M.L."/>
            <person name="Soderlund C."/>
            <person name="Spragon L."/>
            <person name="Steward C.A."/>
            <person name="Sulston J.E."/>
            <person name="Swann R.M."/>
            <person name="Vaudin M."/>
            <person name="Wall M."/>
            <person name="Wallis J.M."/>
            <person name="Whiteley M.N."/>
            <person name="Willey D.L."/>
            <person name="Williams L."/>
            <person name="Williams S.A."/>
            <person name="Williamson H."/>
            <person name="Wilmer T.E."/>
            <person name="Wilming L."/>
            <person name="Wright C.L."/>
            <person name="Hubbard T."/>
            <person name="Bentley D.R."/>
            <person name="Beck S."/>
            <person name="Rogers J."/>
            <person name="Shimizu N."/>
            <person name="Minoshima S."/>
            <person name="Kawasaki K."/>
            <person name="Sasaki T."/>
            <person name="Asakawa S."/>
            <person name="Kudoh J."/>
            <person name="Shintani A."/>
            <person name="Shibuya K."/>
            <person name="Yoshizaki Y."/>
            <person name="Aoki N."/>
            <person name="Mitsuyama S."/>
            <person name="Roe B.A."/>
            <person name="Chen F."/>
            <person name="Chu L."/>
            <person name="Crabtree J."/>
            <person name="Deschamps S."/>
            <person name="Do A."/>
            <person name="Do T."/>
            <person name="Dorman A."/>
            <person name="Fang F."/>
            <person name="Fu Y."/>
            <person name="Hu P."/>
            <person name="Hua A."/>
            <person name="Kenton S."/>
            <person name="Lai H."/>
            <person name="Lao H.I."/>
            <person name="Lewis J."/>
            <person name="Lewis S."/>
            <person name="Lin S.-P."/>
            <person name="Loh P."/>
            <person name="Malaj E."/>
            <person name="Nguyen T."/>
            <person name="Pan H."/>
            <person name="Phan S."/>
            <person name="Qi S."/>
            <person name="Qian Y."/>
            <person name="Ray L."/>
            <person name="Ren Q."/>
            <person name="Shaull S."/>
            <person name="Sloan D."/>
            <person name="Song L."/>
            <person name="Wang Q."/>
            <person name="Wang Y."/>
            <person name="Wang Z."/>
            <person name="White J."/>
            <person name="Willingham D."/>
            <person name="Wu H."/>
            <person name="Yao Z."/>
            <person name="Zhan M."/>
            <person name="Zhang G."/>
            <person name="Chissoe S."/>
            <person name="Murray J."/>
            <person name="Miller N."/>
            <person name="Minx P."/>
            <person name="Fulton R."/>
            <person name="Johnson D."/>
            <person name="Bemis G."/>
            <person name="Bentley D."/>
            <person name="Bradshaw H."/>
            <person name="Bourne S."/>
            <person name="Cordes M."/>
            <person name="Du Z."/>
            <person name="Fulton L."/>
            <person name="Goela D."/>
            <person name="Graves T."/>
            <person name="Hawkins J."/>
            <person name="Hinds K."/>
            <person name="Kemp K."/>
            <person name="Latreille P."/>
            <person name="Layman D."/>
            <person name="Ozersky P."/>
            <person name="Rohlfing T."/>
            <person name="Scheet P."/>
            <person name="Walker C."/>
            <person name="Wamsley A."/>
            <person name="Wohldmann P."/>
            <person name="Pepin K."/>
            <person name="Nelson J."/>
            <person name="Korf I."/>
            <person name="Bedell J.A."/>
            <person name="Hillier L.W."/>
            <person name="Mardis E."/>
            <person name="Waterston R."/>
            <person name="Wilson R."/>
            <person name="Emanuel B.S."/>
            <person name="Shaikh T."/>
            <person name="Kurahashi H."/>
            <person name="Saitta S."/>
            <person name="Budarf M.L."/>
            <person name="McDermid H.E."/>
            <person name="Johnson A."/>
            <person name="Wong A.C.C."/>
            <person name="Morrow B.E."/>
            <person name="Edelmann L."/>
            <person name="Kim U.J."/>
            <person name="Shizuya H."/>
            <person name="Simon M.I."/>
            <person name="Dumanski J.P."/>
            <person name="Peyrard M."/>
            <person name="Kedra D."/>
            <person name="Seroussi E."/>
            <person name="Fransson I."/>
            <person name="Tapia I."/>
            <person name="Bruder C.E."/>
            <person name="O'Brien K.P."/>
            <person name="Wilkinson P."/>
            <person name="Bodenteich A."/>
            <person name="Hartman K."/>
            <person name="Hu X."/>
            <person name="Khan A.S."/>
            <person name="Lane L."/>
            <person name="Tilahun Y."/>
            <person name="Wright H."/>
        </authorList>
    </citation>
    <scope>NUCLEOTIDE SEQUENCE [LARGE SCALE GENOMIC DNA]</scope>
</reference>
<reference key="4">
    <citation type="journal article" date="2004" name="Genome Res.">
        <title>The status, quality, and expansion of the NIH full-length cDNA project: the Mammalian Gene Collection (MGC).</title>
        <authorList>
            <consortium name="The MGC Project Team"/>
        </authorList>
    </citation>
    <scope>NUCLEOTIDE SEQUENCE [LARGE SCALE MRNA] (ISOFORMS 1 AND 2)</scope>
    <source>
        <tissue>Lymph</tissue>
        <tissue>Skin</tissue>
    </source>
</reference>
<reference key="5">
    <citation type="journal article" date="1993" name="Cell">
        <title>SREBP-1, a basic-helix-loop-helix-leucine zipper protein that controls transcription of the low density lipoprotein receptor gene.</title>
        <authorList>
            <person name="Yokoyama C."/>
            <person name="Wang X."/>
            <person name="Briggs M.R."/>
            <person name="Admon A."/>
            <person name="Wu J."/>
            <person name="Hua X."/>
            <person name="Goldstein J.L."/>
            <person name="Brown M.S."/>
        </authorList>
    </citation>
    <scope>PROTEIN SEQUENCE OF 91-109</scope>
</reference>
<reference key="6">
    <citation type="journal article" date="2001" name="J. Biol. Chem.">
        <title>Direct demonstration of rapid degradation of nuclear sterol regulatory element-binding proteins by the ubiquitin-proteasome pathway.</title>
        <authorList>
            <person name="Hirano Y."/>
            <person name="Yoshida M."/>
            <person name="Shimizu M."/>
            <person name="Sato R."/>
        </authorList>
    </citation>
    <scope>SUBCELLULAR LOCATION</scope>
    <scope>UBIQUITINATION</scope>
</reference>
<reference key="7">
    <citation type="journal article" date="2002" name="Cell">
        <title>Crucial step in cholesterol homeostasis: sterols promote binding of SCAP to INSIG-1, a membrane protein that facilitates retention of SREBPs in ER.</title>
        <authorList>
            <person name="Yang T."/>
            <person name="Espenshade P.J."/>
            <person name="Wright M.E."/>
            <person name="Yabe D."/>
            <person name="Gong Y."/>
            <person name="Aebersold R."/>
            <person name="Goldstein J.L."/>
            <person name="Brown M.S."/>
        </authorList>
    </citation>
    <scope>SUBCELLULAR LOCATION</scope>
</reference>
<reference key="8">
    <citation type="journal article" date="2002" name="J. Lipid Res.">
        <title>Transcriptional activities of nuclear SREBP-1a, -1c, and -2 to different target promoters of lipogenic and cholesterogenic genes.</title>
        <authorList>
            <person name="Amemiya-Kudo M."/>
            <person name="Shimano H."/>
            <person name="Hasty A.H."/>
            <person name="Yahagi N."/>
            <person name="Yoshikawa T."/>
            <person name="Matsuzaka T."/>
            <person name="Okazaki H."/>
            <person name="Tamura Y."/>
            <person name="Iizuka Y."/>
            <person name="Ohashi K."/>
            <person name="Osuga J."/>
            <person name="Harada K."/>
            <person name="Gotoda T."/>
            <person name="Sato R."/>
            <person name="Kimura S."/>
            <person name="Ishibashi S."/>
            <person name="Yamada N."/>
        </authorList>
    </citation>
    <scope>FUNCTION</scope>
    <scope>MUTAGENESIS OF TYR-342</scope>
</reference>
<reference key="9">
    <citation type="journal article" date="1996" name="J. Biol. Chem.">
        <title>Regulated cleavage of sterol regulatory element binding proteins requires sequences on both sides of the endoplasmic reticulum membrane.</title>
        <authorList>
            <person name="Hua X."/>
            <person name="Sakai J."/>
            <person name="Brown M.S."/>
            <person name="Goldstein J.L."/>
        </authorList>
    </citation>
    <scope>PROTEOLYTIC CLEAVAGE</scope>
    <scope>MUTAGENESIS OF ASP-478; ARG-519 AND 478-ASP--ARG-481</scope>
</reference>
<reference key="10">
    <citation type="journal article" date="1996" name="Proc. Natl. Acad. Sci. U.S.A.">
        <title>Purification and cDNA cloning of a second apoptosis-related cysteine protease that cleaves and activates sterol regulatory element binding proteins.</title>
        <authorList>
            <person name="Pai J.-T."/>
            <person name="Brown M.S."/>
            <person name="Goldstein J.L."/>
        </authorList>
    </citation>
    <scope>PROTEOLYTIC CLEAVAGE AT ASP-468 BY CASPASES</scope>
</reference>
<reference key="11">
    <citation type="journal article" date="1998" name="J. Biol. Chem.">
        <title>Second-site cleavage in sterol regulatory element-binding protein occurs at transmembrane junction as determined by cysteine panning.</title>
        <authorList>
            <person name="Duncan E.A."/>
            <person name="Dave U.P."/>
            <person name="Sakai J."/>
            <person name="Goldstein J.L."/>
            <person name="Brown M.S."/>
        </authorList>
    </citation>
    <scope>PROTEOLYTIC CLEAVAGE AT LEU-484 BY S2P</scope>
    <scope>MUTAGENESIS OF ARG-479; ARG-481; LEU-484; CYS-485; 478-ASP--ARG-481; 479-ARG--ARG-481 AND 484-LEU-CYS-485</scope>
</reference>
<reference key="12">
    <citation type="journal article" date="2000" name="Proc. Natl. Acad. Sci. U.S.A.">
        <title>Asparagine-proline sequence within membrane-spanning segment of SREBP triggers intramembrane cleavage by site-2 protease.</title>
        <authorList>
            <person name="Ye J."/>
            <person name="Dave U.P."/>
            <person name="Grishin N.V."/>
            <person name="Goldstein J.L."/>
            <person name="Brown M.S."/>
        </authorList>
    </citation>
    <scope>PROTEOLYTIC CLEAVAGE AT LEU-484 BY S2P</scope>
    <scope>PROTEOLYTIC CLEAVAGE AT LEU-522 BY S1P</scope>
    <scope>MUTAGENESIS OF ASN-495; PRO-496; 490-LEU-CYS-491 AND 495-ASN-PRO-496</scope>
</reference>
<reference key="13">
    <citation type="journal article" date="2009" name="J. Biol. Chem.">
        <title>The sterol-sensing endoplasmic reticulum (ER) membrane protein TRC8 hampers ER to Golgi transport of sterol regulatory element-binding protein-2 (SREBP-2)/SREBP cleavage-activated protein and reduces SREBP-2 cleavage.</title>
        <authorList>
            <person name="Irisawa M."/>
            <person name="Inoue J."/>
            <person name="Ozawa N."/>
            <person name="Mori K."/>
            <person name="Sato R."/>
        </authorList>
    </citation>
    <scope>INTERACTION WITH RNF139</scope>
</reference>
<reference key="14">
    <citation type="journal article" date="2013" name="J. Proteome Res.">
        <title>Toward a comprehensive characterization of a human cancer cell phosphoproteome.</title>
        <authorList>
            <person name="Zhou H."/>
            <person name="Di Palma S."/>
            <person name="Preisinger C."/>
            <person name="Peng M."/>
            <person name="Polat A.N."/>
            <person name="Heck A.J."/>
            <person name="Mohammed S."/>
        </authorList>
    </citation>
    <scope>PHOSPHORYLATION [LARGE SCALE ANALYSIS] AT SER-855 AND SER-1098</scope>
    <scope>IDENTIFICATION BY MASS SPECTROMETRY [LARGE SCALE ANALYSIS]</scope>
    <source>
        <tissue>Cervix carcinoma</tissue>
        <tissue>Erythroleukemia</tissue>
    </source>
</reference>
<reference key="15">
    <citation type="journal article" date="2015" name="Nat. Commun.">
        <title>PAQR3 modulates cholesterol homeostasis by anchoring Scap/SREBP complex to the Golgi apparatus.</title>
        <authorList>
            <person name="Xu D."/>
            <person name="Wang Z."/>
            <person name="Zhang Y."/>
            <person name="Jiang W."/>
            <person name="Pan Y."/>
            <person name="Song B.L."/>
            <person name="Chen Y."/>
        </authorList>
    </citation>
    <scope>INTERACTION WITH PAQR3</scope>
    <scope>SUBCELLULAR LOCATION</scope>
</reference>
<reference key="16">
    <citation type="journal article" date="2017" name="Nat. Rev. Endocrinol.">
        <title>SREBP-regulated lipid metabolism: convergent physiology - divergent pathophysiology.</title>
        <authorList>
            <person name="Shimano H."/>
            <person name="Sato R."/>
        </authorList>
    </citation>
    <scope>REVIEW</scope>
</reference>
<reference key="17">
    <citation type="journal article" date="2017" name="Nat. Struct. Mol. Biol.">
        <title>Site-specific mapping of the human SUMO proteome reveals co-modification with phosphorylation.</title>
        <authorList>
            <person name="Hendriks I.A."/>
            <person name="Lyon D."/>
            <person name="Young C."/>
            <person name="Jensen L.J."/>
            <person name="Vertegaal A.C."/>
            <person name="Nielsen M.L."/>
        </authorList>
    </citation>
    <scope>SUMOYLATION [LARGE SCALE ANALYSIS] AT LYS-464</scope>
    <scope>IDENTIFICATION BY MASS SPECTROMETRY [LARGE SCALE ANALYSIS]</scope>
</reference>
<reference key="18">
    <citation type="journal article" date="2020" name="Nature">
        <title>The gluconeogenic enzyme PCK1 phosphorylates INSIG1/2 for lipogenesis.</title>
        <authorList>
            <person name="Xu D."/>
            <person name="Wang Z."/>
            <person name="Xia Y."/>
            <person name="Shao F."/>
            <person name="Xia W."/>
            <person name="Wei Y."/>
            <person name="Li X."/>
            <person name="Qian X."/>
            <person name="Lee J.H."/>
            <person name="Du L."/>
            <person name="Zheng Y."/>
            <person name="Lv G."/>
            <person name="Leu J.S."/>
            <person name="Wang H."/>
            <person name="Xing D."/>
            <person name="Liang T."/>
            <person name="Hung M.C."/>
            <person name="Lu Z."/>
        </authorList>
    </citation>
    <scope>FUNCTION</scope>
    <scope>SUBCELLULAR LOCATION</scope>
    <scope>INTERACTION WITH SCAP</scope>
    <scope>PROTEOLYTIC CLEAVAGE</scope>
</reference>
<reference key="19">
    <citation type="journal article" date="2022" name="Cell Syst.">
        <title>Directed mutational scanning reveals a balance between acidic and hydrophobic residues in strong human activation domains.</title>
        <authorList>
            <person name="Staller M.V."/>
            <person name="Ramirez E."/>
            <person name="Kotha S.R."/>
            <person name="Holehouse A.S."/>
            <person name="Pappu R.V."/>
            <person name="Cohen B.A."/>
        </authorList>
    </citation>
    <scope>REGION</scope>
</reference>
<reference key="20">
    <citation type="journal article" date="2022" name="JCI Insight">
        <title>ARMC5-CUL3 E3 ligase targets full-length SREBF in adrenocortical tumors.</title>
        <authorList>
            <person name="Okuno Y."/>
            <person name="Fukuhara A."/>
            <person name="Otsuki M."/>
            <person name="Shimomura I."/>
        </authorList>
    </citation>
    <scope>UBIQUITINATION</scope>
</reference>
<reference key="21">
    <citation type="journal article" date="2003" name="Science">
        <title>The structure of importin-beta bound to SREBP-2: nuclear import of a transcription factor.</title>
        <authorList>
            <person name="Lee S.J."/>
            <person name="Sekimoto T."/>
            <person name="Yamashita E."/>
            <person name="Nagoshi E."/>
            <person name="Nakagawa A."/>
            <person name="Imamoto N."/>
            <person name="Yoshimura M."/>
            <person name="Sakai H."/>
            <person name="Chong K.T."/>
            <person name="Tsukihara T."/>
            <person name="Yoneda Y."/>
        </authorList>
    </citation>
    <scope>X-RAY CRYSTALLOGRAPHY (3.0 ANGSTROMS) OF 343-403</scope>
</reference>
<reference key="22">
    <citation type="journal article" date="2006" name="Science">
        <title>The consensus coding sequences of human breast and colorectal cancers.</title>
        <authorList>
            <person name="Sjoeblom T."/>
            <person name="Jones S."/>
            <person name="Wood L.D."/>
            <person name="Parsons D.W."/>
            <person name="Lin J."/>
            <person name="Barber T.D."/>
            <person name="Mandelker D."/>
            <person name="Leary R.J."/>
            <person name="Ptak J."/>
            <person name="Silliman N."/>
            <person name="Szabo S."/>
            <person name="Buckhaults P."/>
            <person name="Farrell C."/>
            <person name="Meeh P."/>
            <person name="Markowitz S.D."/>
            <person name="Willis J."/>
            <person name="Dawson D."/>
            <person name="Willson J.K.V."/>
            <person name="Gazdar A.F."/>
            <person name="Hartigan J."/>
            <person name="Wu L."/>
            <person name="Liu C."/>
            <person name="Parmigiani G."/>
            <person name="Park B.H."/>
            <person name="Bachman K.E."/>
            <person name="Papadopoulos N."/>
            <person name="Vogelstein B."/>
            <person name="Kinzler K.W."/>
            <person name="Velculescu V.E."/>
        </authorList>
    </citation>
    <scope>VARIANTS [LARGE SCALE ANALYSIS] SER-273 AND LYS-347</scope>
</reference>
<protein>
    <recommendedName>
        <fullName evidence="20">Sterol regulatory element-binding protein 2</fullName>
        <shortName evidence="20">SREBP-2</shortName>
    </recommendedName>
    <alternativeName>
        <fullName>Class D basic helix-loop-helix protein 2</fullName>
        <shortName>bHLHd2</shortName>
    </alternativeName>
    <alternativeName>
        <fullName evidence="20">Sterol regulatory element-binding transcription factor 2</fullName>
    </alternativeName>
    <component>
        <recommendedName>
            <fullName evidence="24">Processed sterol regulatory element-binding protein 2</fullName>
        </recommendedName>
        <alternativeName>
            <fullName evidence="24">Transcription factor SREBF2</fullName>
        </alternativeName>
    </component>
</protein>
<name>SRBP2_HUMAN</name>
<organism>
    <name type="scientific">Homo sapiens</name>
    <name type="common">Human</name>
    <dbReference type="NCBI Taxonomy" id="9606"/>
    <lineage>
        <taxon>Eukaryota</taxon>
        <taxon>Metazoa</taxon>
        <taxon>Chordata</taxon>
        <taxon>Craniata</taxon>
        <taxon>Vertebrata</taxon>
        <taxon>Euteleostomi</taxon>
        <taxon>Mammalia</taxon>
        <taxon>Eutheria</taxon>
        <taxon>Euarchontoglires</taxon>
        <taxon>Primates</taxon>
        <taxon>Haplorrhini</taxon>
        <taxon>Catarrhini</taxon>
        <taxon>Hominidae</taxon>
        <taxon>Homo</taxon>
    </lineage>
</organism>
<evidence type="ECO:0000250" key="1">
    <source>
        <dbReference type="UniProtKB" id="Q3U1N2"/>
    </source>
</evidence>
<evidence type="ECO:0000255" key="2"/>
<evidence type="ECO:0000255" key="3">
    <source>
        <dbReference type="PROSITE-ProRule" id="PRU00981"/>
    </source>
</evidence>
<evidence type="ECO:0000256" key="4">
    <source>
        <dbReference type="SAM" id="MobiDB-lite"/>
    </source>
</evidence>
<evidence type="ECO:0000269" key="5">
    <source>
    </source>
</evidence>
<evidence type="ECO:0000269" key="6">
    <source>
    </source>
</evidence>
<evidence type="ECO:0000269" key="7">
    <source>
    </source>
</evidence>
<evidence type="ECO:0000269" key="8">
    <source>
    </source>
</evidence>
<evidence type="ECO:0000269" key="9">
    <source>
    </source>
</evidence>
<evidence type="ECO:0000269" key="10">
    <source>
    </source>
</evidence>
<evidence type="ECO:0000269" key="11">
    <source>
    </source>
</evidence>
<evidence type="ECO:0000269" key="12">
    <source>
    </source>
</evidence>
<evidence type="ECO:0000269" key="13">
    <source>
    </source>
</evidence>
<evidence type="ECO:0000269" key="14">
    <source>
    </source>
</evidence>
<evidence type="ECO:0000269" key="15">
    <source>
    </source>
</evidence>
<evidence type="ECO:0000269" key="16">
    <source>
    </source>
</evidence>
<evidence type="ECO:0000269" key="17">
    <source>
    </source>
</evidence>
<evidence type="ECO:0000269" key="18">
    <source>
    </source>
</evidence>
<evidence type="ECO:0000269" key="19">
    <source>
    </source>
</evidence>
<evidence type="ECO:0000303" key="20">
    <source>
    </source>
</evidence>
<evidence type="ECO:0000303" key="21">
    <source>
    </source>
</evidence>
<evidence type="ECO:0000303" key="22">
    <source>
    </source>
</evidence>
<evidence type="ECO:0000303" key="23">
    <source>
    </source>
</evidence>
<evidence type="ECO:0000305" key="24"/>
<evidence type="ECO:0000305" key="25">
    <source>
    </source>
</evidence>
<evidence type="ECO:0000305" key="26">
    <source>
    </source>
</evidence>
<evidence type="ECO:0000312" key="27">
    <source>
        <dbReference type="HGNC" id="HGNC:11290"/>
    </source>
</evidence>
<evidence type="ECO:0007744" key="28">
    <source>
    </source>
</evidence>
<evidence type="ECO:0007744" key="29">
    <source>
    </source>
</evidence>
<evidence type="ECO:0007829" key="30">
    <source>
        <dbReference type="PDB" id="1UKL"/>
    </source>
</evidence>
<feature type="chain" id="PRO_0000127452" description="Sterol regulatory element-binding protein 2">
    <location>
        <begin position="1"/>
        <end position="1141"/>
    </location>
</feature>
<feature type="chain" id="PRO_0000314033" description="Processed sterol regulatory element-binding protein 2" evidence="25 26">
    <location>
        <begin position="1"/>
        <end position="484"/>
    </location>
</feature>
<feature type="topological domain" description="Cytoplasmic" evidence="2">
    <location>
        <begin position="1"/>
        <end position="479"/>
    </location>
</feature>
<feature type="transmembrane region" description="Helical" evidence="2">
    <location>
        <begin position="480"/>
        <end position="500"/>
    </location>
</feature>
<feature type="topological domain" description="Lumenal" evidence="2">
    <location>
        <begin position="501"/>
        <end position="533"/>
    </location>
</feature>
<feature type="transmembrane region" description="Helical" evidence="2">
    <location>
        <begin position="534"/>
        <end position="554"/>
    </location>
</feature>
<feature type="topological domain" description="Cytoplasmic" evidence="2">
    <location>
        <begin position="555"/>
        <end position="1139"/>
    </location>
</feature>
<feature type="domain" description="bHLH" evidence="3">
    <location>
        <begin position="330"/>
        <end position="380"/>
    </location>
</feature>
<feature type="region of interest" description="Transcriptional activation (acidic)" evidence="14">
    <location>
        <begin position="1"/>
        <end position="50"/>
    </location>
</feature>
<feature type="region of interest" description="Disordered" evidence="4">
    <location>
        <begin position="48"/>
        <end position="144"/>
    </location>
</feature>
<feature type="region of interest" description="Interaction with LMNA" evidence="1">
    <location>
        <begin position="237"/>
        <end position="491"/>
    </location>
</feature>
<feature type="region of interest" description="Leucine-zipper">
    <location>
        <begin position="380"/>
        <end position="401"/>
    </location>
</feature>
<feature type="compositionally biased region" description="Low complexity" evidence="4">
    <location>
        <begin position="63"/>
        <end position="82"/>
    </location>
</feature>
<feature type="compositionally biased region" description="Polar residues" evidence="4">
    <location>
        <begin position="88"/>
        <end position="97"/>
    </location>
</feature>
<feature type="compositionally biased region" description="Low complexity" evidence="4">
    <location>
        <begin position="98"/>
        <end position="110"/>
    </location>
</feature>
<feature type="compositionally biased region" description="Polar residues" evidence="4">
    <location>
        <begin position="114"/>
        <end position="126"/>
    </location>
</feature>
<feature type="site" description="Cleavage; by caspase-3 and caspase-7" evidence="18">
    <location>
        <begin position="468"/>
        <end position="469"/>
    </location>
</feature>
<feature type="site" description="Cleavage; by MBTPS2" evidence="5 19">
    <location>
        <begin position="484"/>
        <end position="485"/>
    </location>
</feature>
<feature type="site" description="Cleavage; by MBTPS1" evidence="5">
    <location>
        <begin position="522"/>
        <end position="523"/>
    </location>
</feature>
<feature type="modified residue" description="Phosphoserine" evidence="28">
    <location>
        <position position="855"/>
    </location>
</feature>
<feature type="modified residue" description="Phosphoserine" evidence="28">
    <location>
        <position position="1098"/>
    </location>
</feature>
<feature type="cross-link" description="Glycyl lysine isopeptide (Lys-Gly) (interchain with G-Cter in SUMO2)" evidence="29">
    <location>
        <position position="464"/>
    </location>
</feature>
<feature type="splice variant" id="VSP_054283" description="In isoform 2." evidence="21">
    <location>
        <begin position="273"/>
        <end position="275"/>
    </location>
</feature>
<feature type="splice variant" id="VSP_054284" description="In isoform 2." evidence="21">
    <original>DFAAAAGNLQTCLAVLGRALPTSRLDLACSLSWNVIRYSLQKLRLVRWLLKKVFQCRRATPATEAGFEDEAKTSARDAALAYHRLHQLHITGKLPA</original>
    <variation>VYGKKSGATHSIEEELNIHISRGTRTRTLLSSRRFCSCCRQPTNLPGSFGPGTAHLPPGPGLQPLLERDPLQPAEATPGALAAQESLPVPAGHASH</variation>
    <location>
        <begin position="589"/>
        <end position="684"/>
    </location>
</feature>
<feature type="splice variant" id="VSP_054285" description="In isoform 2." evidence="21">
    <location>
        <begin position="685"/>
        <end position="1141"/>
    </location>
</feature>
<feature type="sequence variant" id="VAR_036394" description="In a breast cancer sample; somatic mutation; dbSNP:rs2077134829." evidence="9">
    <original>A</original>
    <variation>S</variation>
    <location>
        <position position="273"/>
    </location>
</feature>
<feature type="sequence variant" id="VAR_036395" description="In a breast cancer sample; somatic mutation." evidence="9">
    <original>N</original>
    <variation>K</variation>
    <location>
        <position position="347"/>
    </location>
</feature>
<feature type="sequence variant" id="VAR_049550" description="In dbSNP:rs17002714.">
    <original>M</original>
    <variation>L</variation>
    <location>
        <position position="536"/>
    </location>
</feature>
<feature type="sequence variant" id="VAR_028440" description="In dbSNP:rs2228314." evidence="16">
    <original>G</original>
    <variation>A</variation>
    <location>
        <position position="595"/>
    </location>
</feature>
<feature type="sequence variant" id="VAR_028441" description="In dbSNP:rs2229440.">
    <original>V</original>
    <variation>M</variation>
    <location>
        <position position="623"/>
    </location>
</feature>
<feature type="sequence variant" id="VAR_049551" description="In dbSNP:rs2228313.">
    <original>R</original>
    <variation>S</variation>
    <location>
        <position position="860"/>
    </location>
</feature>
<feature type="mutagenesis site" description="Abolished transactivation activity." evidence="7">
    <original>Y</original>
    <variation>R</variation>
    <location>
        <position position="342"/>
    </location>
</feature>
<feature type="mutagenesis site" description="Loss of cleavage by S2P." evidence="17 19">
    <original>DRSR</original>
    <variation>AAAA</variation>
    <location>
        <begin position="478"/>
        <end position="481"/>
    </location>
</feature>
<feature type="mutagenesis site" description="Loss of cleavage by S2P." evidence="17 19">
    <original>DRSR</original>
    <variation>AS</variation>
    <location>
        <begin position="478"/>
        <end position="481"/>
    </location>
</feature>
<feature type="mutagenesis site" description="No effect on proteolytic processing in response to low sterol." evidence="17">
    <original>D</original>
    <variation>A</variation>
    <location>
        <position position="478"/>
    </location>
</feature>
<feature type="mutagenesis site" description="Loss of cleavage by S2P." evidence="19">
    <original>RSR</original>
    <variation>AAA</variation>
    <location>
        <begin position="479"/>
        <end position="481"/>
    </location>
</feature>
<feature type="mutagenesis site" description="No effect on cleavage by S2P." evidence="19">
    <original>R</original>
    <variation>A</variation>
    <location>
        <position position="479"/>
    </location>
</feature>
<feature type="mutagenesis site" description="No effect on cleavage by S2P." evidence="19">
    <original>R</original>
    <variation>A</variation>
    <location>
        <position position="481"/>
    </location>
</feature>
<feature type="mutagenesis site" description="No effect on cleavage by S2P." evidence="19">
    <original>LC</original>
    <variation>FF</variation>
    <location>
        <begin position="484"/>
        <end position="485"/>
    </location>
</feature>
<feature type="mutagenesis site" description="No effect on cleavage by S2P." evidence="19">
    <original>L</original>
    <variation>A</variation>
    <location>
        <position position="484"/>
    </location>
</feature>
<feature type="mutagenesis site" description="No effect on cleavage by S2P." evidence="19">
    <original>C</original>
    <variation>A</variation>
    <location>
        <position position="485"/>
    </location>
</feature>
<feature type="mutagenesis site" description="Restores cleavage by S2P; when associated with F-495 and L-496. No effect on site of cleavage by S2P." evidence="5">
    <original>LC</original>
    <variation>NP</variation>
    <location>
        <begin position="490"/>
        <end position="491"/>
    </location>
</feature>
<feature type="mutagenesis site" description="Loss of cleavage by S2P." evidence="5">
    <original>NP</original>
    <variation>FL</variation>
    <location>
        <begin position="495"/>
        <end position="496"/>
    </location>
</feature>
<feature type="mutagenesis site" description="Reduced cleavage by S2P." evidence="5">
    <original>N</original>
    <variation>F</variation>
    <location>
        <position position="495"/>
    </location>
</feature>
<feature type="mutagenesis site" description="Reduced cleavage by S2P." evidence="5">
    <original>P</original>
    <variation>L</variation>
    <location>
        <position position="496"/>
    </location>
</feature>
<feature type="mutagenesis site" description="Loss of proteolytic processing in response to low sterol." evidence="17">
    <original>R</original>
    <variation>A</variation>
    <location>
        <position position="519"/>
    </location>
</feature>
<feature type="mutagenesis site" description="No effect on proteolytic processing in response to low sterol." evidence="17">
    <original>R</original>
    <variation>K</variation>
    <location>
        <position position="519"/>
    </location>
</feature>
<feature type="sequence conflict" description="In Ref. 1; AAA50746." evidence="24" ref="1">
    <original>A</original>
    <variation>G</variation>
    <location>
        <position position="961"/>
    </location>
</feature>
<feature type="sequence conflict" description="In Ref. 1; AAA50746." evidence="24" ref="1">
    <original>A</original>
    <variation>G</variation>
    <location>
        <position position="1045"/>
    </location>
</feature>
<feature type="helix" evidence="30">
    <location>
        <begin position="346"/>
        <end position="357"/>
    </location>
</feature>
<feature type="turn" evidence="30">
    <location>
        <begin position="366"/>
        <end position="368"/>
    </location>
</feature>
<feature type="helix" evidence="30">
    <location>
        <begin position="369"/>
        <end position="399"/>
    </location>
</feature>